<comment type="function">
    <text evidence="1 3">May be involved in the O-acetylation of mannan (PubMed:22086088). May act as a bridging protein that binds pectin and other cell wall polysaccharides. Probably involved in maintaining esterification of pectins (By similarity).</text>
</comment>
<comment type="subcellular location">
    <subcellularLocation>
        <location evidence="4">Membrane</location>
        <topology evidence="4">Single-pass type II membrane protein</topology>
    </subcellularLocation>
</comment>
<comment type="miscellaneous">
    <text evidence="5">Contains 2 motifs that are conserved in esterases, but it is unlikely that this protein belongs to the catalytically active pectin esterases.</text>
</comment>
<comment type="similarity">
    <text evidence="4">Belongs to the PC-esterase family. TBL subfamily.</text>
</comment>
<comment type="sequence caution" evidence="4">
    <conflict type="erroneous gene model prediction">
        <sequence resource="EMBL-CDS" id="AAF97338"/>
    </conflict>
</comment>
<evidence type="ECO:0000250" key="1">
    <source>
        <dbReference type="UniProtKB" id="Q9FG35"/>
    </source>
</evidence>
<evidence type="ECO:0000255" key="2"/>
<evidence type="ECO:0000269" key="3">
    <source>
    </source>
</evidence>
<evidence type="ECO:0000305" key="4"/>
<evidence type="ECO:0000305" key="5">
    <source>
    </source>
</evidence>
<gene>
    <name type="primary">TBL25</name>
    <name type="ordered locus">At1g01430</name>
    <name type="ORF">F6F3.23</name>
</gene>
<proteinExistence type="evidence at transcript level"/>
<protein>
    <recommendedName>
        <fullName>Protein trichome birefringence-like 25</fullName>
    </recommendedName>
</protein>
<keyword id="KW-0472">Membrane</keyword>
<keyword id="KW-1185">Reference proteome</keyword>
<keyword id="KW-0735">Signal-anchor</keyword>
<keyword id="KW-0812">Transmembrane</keyword>
<keyword id="KW-1133">Transmembrane helix</keyword>
<name>TBL25_ARATH</name>
<sequence>MDSLRLISKSIKIEGTPFGSSHQRNQIFLKSVAFFLLIGLAYRFLITNSTVSPVPTVRSSPESLPPDPSGLTAITQTSASVDSPANITTIASQNVSTKCDIFIGNWVPDPSGPIYTNVSCRHIQDYQNCLKNGRPDVNYLRWRWQPRDCDLPRFNPEQFLDNMRNKWLAFIGDSISRNHVQSLLCILSQVEEVEDIFHDKEYKSRIWRFPSYNFTLSVIWSPFLVKAETFENGVPFSDIRVHLDKLDQKWTDQYINFDYVVISGGKWFLKTTIFHENNTVTGCHYCQGKNNMTELGYLYSYRKVLHLVLDFVAEPNHKAQVLFRTTTPDHFENGEWDSGGFCNRTMPFTEGSEGEMKSEDVSMRDIELEEFYKTTTTQQEGSNSNIVLLDTTSMSLLRPDGHPGPYRYPNPFAGLKNKELNQVQNDCLHWCLPGPIDSWNDLMVEVMLNRERQRRE</sequence>
<feature type="chain" id="PRO_0000425390" description="Protein trichome birefringence-like 25">
    <location>
        <begin position="1"/>
        <end position="456"/>
    </location>
</feature>
<feature type="transmembrane region" description="Helical; Signal-anchor for type II membrane protein" evidence="2">
    <location>
        <begin position="26"/>
        <end position="42"/>
    </location>
</feature>
<feature type="short sequence motif" description="GDS motif">
    <location>
        <begin position="172"/>
        <end position="174"/>
    </location>
</feature>
<feature type="short sequence motif" description="DCXHWCLPGXXDXWN motif">
    <location>
        <begin position="426"/>
        <end position="440"/>
    </location>
</feature>
<reference key="1">
    <citation type="journal article" date="2000" name="Nature">
        <title>Sequence and analysis of chromosome 1 of the plant Arabidopsis thaliana.</title>
        <authorList>
            <person name="Theologis A."/>
            <person name="Ecker J.R."/>
            <person name="Palm C.J."/>
            <person name="Federspiel N.A."/>
            <person name="Kaul S."/>
            <person name="White O."/>
            <person name="Alonso J."/>
            <person name="Altafi H."/>
            <person name="Araujo R."/>
            <person name="Bowman C.L."/>
            <person name="Brooks S.Y."/>
            <person name="Buehler E."/>
            <person name="Chan A."/>
            <person name="Chao Q."/>
            <person name="Chen H."/>
            <person name="Cheuk R.F."/>
            <person name="Chin C.W."/>
            <person name="Chung M.K."/>
            <person name="Conn L."/>
            <person name="Conway A.B."/>
            <person name="Conway A.R."/>
            <person name="Creasy T.H."/>
            <person name="Dewar K."/>
            <person name="Dunn P."/>
            <person name="Etgu P."/>
            <person name="Feldblyum T.V."/>
            <person name="Feng J.-D."/>
            <person name="Fong B."/>
            <person name="Fujii C.Y."/>
            <person name="Gill J.E."/>
            <person name="Goldsmith A.D."/>
            <person name="Haas B."/>
            <person name="Hansen N.F."/>
            <person name="Hughes B."/>
            <person name="Huizar L."/>
            <person name="Hunter J.L."/>
            <person name="Jenkins J."/>
            <person name="Johnson-Hopson C."/>
            <person name="Khan S."/>
            <person name="Khaykin E."/>
            <person name="Kim C.J."/>
            <person name="Koo H.L."/>
            <person name="Kremenetskaia I."/>
            <person name="Kurtz D.B."/>
            <person name="Kwan A."/>
            <person name="Lam B."/>
            <person name="Langin-Hooper S."/>
            <person name="Lee A."/>
            <person name="Lee J.M."/>
            <person name="Lenz C.A."/>
            <person name="Li J.H."/>
            <person name="Li Y.-P."/>
            <person name="Lin X."/>
            <person name="Liu S.X."/>
            <person name="Liu Z.A."/>
            <person name="Luros J.S."/>
            <person name="Maiti R."/>
            <person name="Marziali A."/>
            <person name="Militscher J."/>
            <person name="Miranda M."/>
            <person name="Nguyen M."/>
            <person name="Nierman W.C."/>
            <person name="Osborne B.I."/>
            <person name="Pai G."/>
            <person name="Peterson J."/>
            <person name="Pham P.K."/>
            <person name="Rizzo M."/>
            <person name="Rooney T."/>
            <person name="Rowley D."/>
            <person name="Sakano H."/>
            <person name="Salzberg S.L."/>
            <person name="Schwartz J.R."/>
            <person name="Shinn P."/>
            <person name="Southwick A.M."/>
            <person name="Sun H."/>
            <person name="Tallon L.J."/>
            <person name="Tambunga G."/>
            <person name="Toriumi M.J."/>
            <person name="Town C.D."/>
            <person name="Utterback T."/>
            <person name="Van Aken S."/>
            <person name="Vaysberg M."/>
            <person name="Vysotskaia V.S."/>
            <person name="Walker M."/>
            <person name="Wu D."/>
            <person name="Yu G."/>
            <person name="Fraser C.M."/>
            <person name="Venter J.C."/>
            <person name="Davis R.W."/>
        </authorList>
    </citation>
    <scope>NUCLEOTIDE SEQUENCE [LARGE SCALE GENOMIC DNA]</scope>
    <source>
        <strain>cv. Columbia</strain>
    </source>
</reference>
<reference key="2">
    <citation type="journal article" date="2017" name="Plant J.">
        <title>Araport11: a complete reannotation of the Arabidopsis thaliana reference genome.</title>
        <authorList>
            <person name="Cheng C.Y."/>
            <person name="Krishnakumar V."/>
            <person name="Chan A.P."/>
            <person name="Thibaud-Nissen F."/>
            <person name="Schobel S."/>
            <person name="Town C.D."/>
        </authorList>
    </citation>
    <scope>GENOME REANNOTATION</scope>
    <source>
        <strain>cv. Columbia</strain>
    </source>
</reference>
<reference key="3">
    <citation type="journal article" date="2003" name="Science">
        <title>Empirical analysis of transcriptional activity in the Arabidopsis genome.</title>
        <authorList>
            <person name="Yamada K."/>
            <person name="Lim J."/>
            <person name="Dale J.M."/>
            <person name="Chen H."/>
            <person name="Shinn P."/>
            <person name="Palm C.J."/>
            <person name="Southwick A.M."/>
            <person name="Wu H.C."/>
            <person name="Kim C.J."/>
            <person name="Nguyen M."/>
            <person name="Pham P.K."/>
            <person name="Cheuk R.F."/>
            <person name="Karlin-Newmann G."/>
            <person name="Liu S.X."/>
            <person name="Lam B."/>
            <person name="Sakano H."/>
            <person name="Wu T."/>
            <person name="Yu G."/>
            <person name="Miranda M."/>
            <person name="Quach H.L."/>
            <person name="Tripp M."/>
            <person name="Chang C.H."/>
            <person name="Lee J.M."/>
            <person name="Toriumi M.J."/>
            <person name="Chan M.M."/>
            <person name="Tang C.C."/>
            <person name="Onodera C.S."/>
            <person name="Deng J.M."/>
            <person name="Akiyama K."/>
            <person name="Ansari Y."/>
            <person name="Arakawa T."/>
            <person name="Banh J."/>
            <person name="Banno F."/>
            <person name="Bowser L."/>
            <person name="Brooks S.Y."/>
            <person name="Carninci P."/>
            <person name="Chao Q."/>
            <person name="Choy N."/>
            <person name="Enju A."/>
            <person name="Goldsmith A.D."/>
            <person name="Gurjal M."/>
            <person name="Hansen N.F."/>
            <person name="Hayashizaki Y."/>
            <person name="Johnson-Hopson C."/>
            <person name="Hsuan V.W."/>
            <person name="Iida K."/>
            <person name="Karnes M."/>
            <person name="Khan S."/>
            <person name="Koesema E."/>
            <person name="Ishida J."/>
            <person name="Jiang P.X."/>
            <person name="Jones T."/>
            <person name="Kawai J."/>
            <person name="Kamiya A."/>
            <person name="Meyers C."/>
            <person name="Nakajima M."/>
            <person name="Narusaka M."/>
            <person name="Seki M."/>
            <person name="Sakurai T."/>
            <person name="Satou M."/>
            <person name="Tamse R."/>
            <person name="Vaysberg M."/>
            <person name="Wallender E.K."/>
            <person name="Wong C."/>
            <person name="Yamamura Y."/>
            <person name="Yuan S."/>
            <person name="Shinozaki K."/>
            <person name="Davis R.W."/>
            <person name="Theologis A."/>
            <person name="Ecker J.R."/>
        </authorList>
    </citation>
    <scope>NUCLEOTIDE SEQUENCE [LARGE SCALE MRNA]</scope>
    <source>
        <strain>cv. Columbia</strain>
    </source>
</reference>
<reference key="4">
    <citation type="journal article" date="2007" name="Plant J.">
        <title>Arabidopsis ESK1 encodes a novel regulator of freezing tolerance.</title>
        <authorList>
            <person name="Xin Z."/>
            <person name="Mandaokar A."/>
            <person name="Chen J."/>
            <person name="Last R.L."/>
            <person name="Browse J."/>
        </authorList>
    </citation>
    <scope>GENE FAMILY</scope>
    <source>
        <strain>cv. Columbia</strain>
    </source>
</reference>
<reference key="5">
    <citation type="journal article" date="2010" name="Plant Physiol.">
        <title>TRICHOME BIREFRINGENCE and its homolog AT5G01360 encode plant-specific DUF231 proteins required for cellulose biosynthesis in Arabidopsis.</title>
        <authorList>
            <person name="Bischoff V."/>
            <person name="Nita S."/>
            <person name="Neumetzler L."/>
            <person name="Schindelasch D."/>
            <person name="Urbain A."/>
            <person name="Eshed R."/>
            <person name="Persson S."/>
            <person name="Delmer D."/>
            <person name="Scheible W.R."/>
        </authorList>
    </citation>
    <scope>GENE FAMILY</scope>
    <scope>NOMENCLATURE</scope>
</reference>
<reference key="6">
    <citation type="journal article" date="2011" name="Plant Cell">
        <title>O-acetylation of Arabidopsis hemicellulose xyloglucan requires AXY4 or AXY4L, proteins with a TBL and DUF231 domain.</title>
        <authorList>
            <person name="Gille S."/>
            <person name="de Souza A."/>
            <person name="Xiong G."/>
            <person name="Benz M."/>
            <person name="Cheng K."/>
            <person name="Schultink A."/>
            <person name="Reca I.B."/>
            <person name="Pauly M."/>
        </authorList>
    </citation>
    <scope>FUNCTION</scope>
</reference>
<reference key="7">
    <citation type="journal article" date="2010" name="Plant Signal. Behav.">
        <title>Involvement of TBL/DUF231 proteins into cell wall biology.</title>
        <authorList>
            <person name="Bischoff V."/>
            <person name="Selbig J."/>
            <person name="Scheible W.R."/>
        </authorList>
    </citation>
    <scope>3D-STRUCTURE MODELING</scope>
</reference>
<accession>Q84JH9</accession>
<accession>Q9LNI0</accession>
<organism>
    <name type="scientific">Arabidopsis thaliana</name>
    <name type="common">Mouse-ear cress</name>
    <dbReference type="NCBI Taxonomy" id="3702"/>
    <lineage>
        <taxon>Eukaryota</taxon>
        <taxon>Viridiplantae</taxon>
        <taxon>Streptophyta</taxon>
        <taxon>Embryophyta</taxon>
        <taxon>Tracheophyta</taxon>
        <taxon>Spermatophyta</taxon>
        <taxon>Magnoliopsida</taxon>
        <taxon>eudicotyledons</taxon>
        <taxon>Gunneridae</taxon>
        <taxon>Pentapetalae</taxon>
        <taxon>rosids</taxon>
        <taxon>malvids</taxon>
        <taxon>Brassicales</taxon>
        <taxon>Brassicaceae</taxon>
        <taxon>Camelineae</taxon>
        <taxon>Arabidopsis</taxon>
    </lineage>
</organism>
<dbReference type="EMBL" id="AC023628">
    <property type="protein sequence ID" value="AAF97338.1"/>
    <property type="status" value="ALT_SEQ"/>
    <property type="molecule type" value="Genomic_DNA"/>
</dbReference>
<dbReference type="EMBL" id="CP002684">
    <property type="protein sequence ID" value="AEE27285.1"/>
    <property type="molecule type" value="Genomic_DNA"/>
</dbReference>
<dbReference type="EMBL" id="BT004301">
    <property type="protein sequence ID" value="AAO42299.1"/>
    <property type="molecule type" value="mRNA"/>
</dbReference>
<dbReference type="EMBL" id="BT005623">
    <property type="protein sequence ID" value="AAO64043.1"/>
    <property type="molecule type" value="mRNA"/>
</dbReference>
<dbReference type="PIR" id="H86144">
    <property type="entry name" value="H86144"/>
</dbReference>
<dbReference type="RefSeq" id="NP_171650.2">
    <property type="nucleotide sequence ID" value="NM_100025.3"/>
</dbReference>
<dbReference type="SMR" id="Q84JH9"/>
<dbReference type="FunCoup" id="Q84JH9">
    <property type="interactions" value="70"/>
</dbReference>
<dbReference type="STRING" id="3702.Q84JH9"/>
<dbReference type="PaxDb" id="3702-AT1G01430.1"/>
<dbReference type="ProteomicsDB" id="234195"/>
<dbReference type="EnsemblPlants" id="AT1G01430.1">
    <property type="protein sequence ID" value="AT1G01430.1"/>
    <property type="gene ID" value="AT1G01430"/>
</dbReference>
<dbReference type="GeneID" id="837247"/>
<dbReference type="Gramene" id="AT1G01430.1">
    <property type="protein sequence ID" value="AT1G01430.1"/>
    <property type="gene ID" value="AT1G01430"/>
</dbReference>
<dbReference type="KEGG" id="ath:AT1G01430"/>
<dbReference type="Araport" id="AT1G01430"/>
<dbReference type="TAIR" id="AT1G01430">
    <property type="gene designation" value="TBL25"/>
</dbReference>
<dbReference type="eggNOG" id="ENOG502QSJI">
    <property type="taxonomic scope" value="Eukaryota"/>
</dbReference>
<dbReference type="HOGENOM" id="CLU_020953_6_4_1"/>
<dbReference type="InParanoid" id="Q84JH9"/>
<dbReference type="OMA" id="WNDIVME"/>
<dbReference type="PhylomeDB" id="Q84JH9"/>
<dbReference type="PRO" id="PR:Q84JH9"/>
<dbReference type="Proteomes" id="UP000006548">
    <property type="component" value="Chromosome 1"/>
</dbReference>
<dbReference type="ExpressionAtlas" id="Q84JH9">
    <property type="expression patterns" value="baseline and differential"/>
</dbReference>
<dbReference type="GO" id="GO:0016020">
    <property type="term" value="C:membrane"/>
    <property type="evidence" value="ECO:0007669"/>
    <property type="project" value="UniProtKB-SubCell"/>
</dbReference>
<dbReference type="GO" id="GO:0016413">
    <property type="term" value="F:O-acetyltransferase activity"/>
    <property type="evidence" value="ECO:0000314"/>
    <property type="project" value="TAIR"/>
</dbReference>
<dbReference type="InterPro" id="IPR029962">
    <property type="entry name" value="TBL"/>
</dbReference>
<dbReference type="InterPro" id="IPR026057">
    <property type="entry name" value="TBL_C"/>
</dbReference>
<dbReference type="InterPro" id="IPR025846">
    <property type="entry name" value="TBL_N"/>
</dbReference>
<dbReference type="PANTHER" id="PTHR32285:SF324">
    <property type="entry name" value="PROTEIN TRICHOME BIREFRINGENCE-LIKE 25"/>
    <property type="match status" value="1"/>
</dbReference>
<dbReference type="PANTHER" id="PTHR32285">
    <property type="entry name" value="PROTEIN TRICHOME BIREFRINGENCE-LIKE 9-RELATED"/>
    <property type="match status" value="1"/>
</dbReference>
<dbReference type="Pfam" id="PF13839">
    <property type="entry name" value="PC-Esterase"/>
    <property type="match status" value="1"/>
</dbReference>
<dbReference type="Pfam" id="PF14416">
    <property type="entry name" value="PMR5N"/>
    <property type="match status" value="1"/>
</dbReference>